<organism>
    <name type="scientific">Ralstonia nicotianae (strain ATCC BAA-1114 / GMI1000)</name>
    <name type="common">Ralstonia solanacearum</name>
    <dbReference type="NCBI Taxonomy" id="267608"/>
    <lineage>
        <taxon>Bacteria</taxon>
        <taxon>Pseudomonadati</taxon>
        <taxon>Pseudomonadota</taxon>
        <taxon>Betaproteobacteria</taxon>
        <taxon>Burkholderiales</taxon>
        <taxon>Burkholderiaceae</taxon>
        <taxon>Ralstonia</taxon>
        <taxon>Ralstonia solanacearum species complex</taxon>
    </lineage>
</organism>
<accession>Q8Y1Y5</accession>
<reference key="1">
    <citation type="journal article" date="2002" name="Nature">
        <title>Genome sequence of the plant pathogen Ralstonia solanacearum.</title>
        <authorList>
            <person name="Salanoubat M."/>
            <person name="Genin S."/>
            <person name="Artiguenave F."/>
            <person name="Gouzy J."/>
            <person name="Mangenot S."/>
            <person name="Arlat M."/>
            <person name="Billault A."/>
            <person name="Brottier P."/>
            <person name="Camus J.-C."/>
            <person name="Cattolico L."/>
            <person name="Chandler M."/>
            <person name="Choisne N."/>
            <person name="Claudel-Renard C."/>
            <person name="Cunnac S."/>
            <person name="Demange N."/>
            <person name="Gaspin C."/>
            <person name="Lavie M."/>
            <person name="Moisan A."/>
            <person name="Robert C."/>
            <person name="Saurin W."/>
            <person name="Schiex T."/>
            <person name="Siguier P."/>
            <person name="Thebault P."/>
            <person name="Whalen M."/>
            <person name="Wincker P."/>
            <person name="Levy M."/>
            <person name="Weissenbach J."/>
            <person name="Boucher C.A."/>
        </authorList>
    </citation>
    <scope>NUCLEOTIDE SEQUENCE [LARGE SCALE GENOMIC DNA]</scope>
    <source>
        <strain>ATCC BAA-1114 / GMI1000</strain>
    </source>
</reference>
<proteinExistence type="inferred from homology"/>
<feature type="chain" id="PRO_0000162464" description="Regulatory protein RecX">
    <location>
        <begin position="1"/>
        <end position="159"/>
    </location>
</feature>
<comment type="function">
    <text evidence="1">Modulates RecA activity.</text>
</comment>
<comment type="subcellular location">
    <subcellularLocation>
        <location evidence="2">Cytoplasm</location>
    </subcellularLocation>
</comment>
<comment type="similarity">
    <text evidence="2">Belongs to the RecX family.</text>
</comment>
<name>RECX_RALN1</name>
<gene>
    <name type="primary">recX</name>
    <name type="ordered locus">RSc0552</name>
    <name type="ORF">RS04913</name>
</gene>
<dbReference type="EMBL" id="AL646052">
    <property type="protein sequence ID" value="CAD14080.1"/>
    <property type="molecule type" value="Genomic_DNA"/>
</dbReference>
<dbReference type="RefSeq" id="WP_011000511.1">
    <property type="nucleotide sequence ID" value="NC_003295.1"/>
</dbReference>
<dbReference type="SMR" id="Q8Y1Y5"/>
<dbReference type="STRING" id="267608.RSc0552"/>
<dbReference type="EnsemblBacteria" id="CAD14080">
    <property type="protein sequence ID" value="CAD14080"/>
    <property type="gene ID" value="RSc0552"/>
</dbReference>
<dbReference type="KEGG" id="rso:RSc0552"/>
<dbReference type="PATRIC" id="fig|267608.8.peg.582"/>
<dbReference type="eggNOG" id="COG2137">
    <property type="taxonomic scope" value="Bacteria"/>
</dbReference>
<dbReference type="HOGENOM" id="CLU_066607_3_1_4"/>
<dbReference type="Proteomes" id="UP000001436">
    <property type="component" value="Chromosome"/>
</dbReference>
<dbReference type="GO" id="GO:0005737">
    <property type="term" value="C:cytoplasm"/>
    <property type="evidence" value="ECO:0007669"/>
    <property type="project" value="UniProtKB-SubCell"/>
</dbReference>
<dbReference type="GO" id="GO:0006282">
    <property type="term" value="P:regulation of DNA repair"/>
    <property type="evidence" value="ECO:0007669"/>
    <property type="project" value="UniProtKB-UniRule"/>
</dbReference>
<dbReference type="Gene3D" id="1.10.10.10">
    <property type="entry name" value="Winged helix-like DNA-binding domain superfamily/Winged helix DNA-binding domain"/>
    <property type="match status" value="3"/>
</dbReference>
<dbReference type="HAMAP" id="MF_01114">
    <property type="entry name" value="RecX"/>
    <property type="match status" value="1"/>
</dbReference>
<dbReference type="InterPro" id="IPR053926">
    <property type="entry name" value="RecX_HTH_1st"/>
</dbReference>
<dbReference type="InterPro" id="IPR053925">
    <property type="entry name" value="RecX_HTH_3rd"/>
</dbReference>
<dbReference type="InterPro" id="IPR003783">
    <property type="entry name" value="Regulatory_RecX"/>
</dbReference>
<dbReference type="InterPro" id="IPR036388">
    <property type="entry name" value="WH-like_DNA-bd_sf"/>
</dbReference>
<dbReference type="NCBIfam" id="NF001055">
    <property type="entry name" value="PRK00117.2-5"/>
    <property type="match status" value="1"/>
</dbReference>
<dbReference type="PANTHER" id="PTHR33602">
    <property type="entry name" value="REGULATORY PROTEIN RECX FAMILY PROTEIN"/>
    <property type="match status" value="1"/>
</dbReference>
<dbReference type="PANTHER" id="PTHR33602:SF1">
    <property type="entry name" value="REGULATORY PROTEIN RECX FAMILY PROTEIN"/>
    <property type="match status" value="1"/>
</dbReference>
<dbReference type="Pfam" id="PF21982">
    <property type="entry name" value="RecX_HTH1"/>
    <property type="match status" value="1"/>
</dbReference>
<dbReference type="Pfam" id="PF21981">
    <property type="entry name" value="RecX_HTH3"/>
    <property type="match status" value="1"/>
</dbReference>
<keyword id="KW-0963">Cytoplasm</keyword>
<keyword id="KW-1185">Reference proteome</keyword>
<protein>
    <recommendedName>
        <fullName>Regulatory protein RecX</fullName>
    </recommendedName>
</protein>
<sequence length="159" mass="17973">MALPRQPLSLKARALGYLSRREHSRAELRRKLAPHAESVDEVEALLDWLEGENWLSNTRFAESVVHRRASRYGTARLMQELKTHELGDDALGEVKAQLQASEMARAKAVWERRFGRPPADMAERAKQVRFMVARGFSRAVVSRIIQGADALLDDGDEPV</sequence>
<evidence type="ECO:0000250" key="1"/>
<evidence type="ECO:0000305" key="2"/>